<keyword id="KW-0150">Chloroplast</keyword>
<keyword id="KW-0934">Plastid</keyword>
<keyword id="KW-0687">Ribonucleoprotein</keyword>
<keyword id="KW-0689">Ribosomal protein</keyword>
<proteinExistence type="inferred from homology"/>
<feature type="chain" id="PRO_0000115641" description="Small ribosomal subunit protein uS15c">
    <location>
        <begin position="1"/>
        <end position="87"/>
    </location>
</feature>
<organism>
    <name type="scientific">Oenothera elata subsp. hookeri</name>
    <name type="common">Hooker's evening primrose</name>
    <name type="synonym">Oenothera hookeri</name>
    <dbReference type="NCBI Taxonomy" id="85636"/>
    <lineage>
        <taxon>Eukaryota</taxon>
        <taxon>Viridiplantae</taxon>
        <taxon>Streptophyta</taxon>
        <taxon>Embryophyta</taxon>
        <taxon>Tracheophyta</taxon>
        <taxon>Spermatophyta</taxon>
        <taxon>Magnoliopsida</taxon>
        <taxon>eudicotyledons</taxon>
        <taxon>Gunneridae</taxon>
        <taxon>Pentapetalae</taxon>
        <taxon>rosids</taxon>
        <taxon>malvids</taxon>
        <taxon>Myrtales</taxon>
        <taxon>Onagraceae</taxon>
        <taxon>Onagroideae</taxon>
        <taxon>Onagreae</taxon>
        <taxon>Oenothera</taxon>
    </lineage>
</organism>
<protein>
    <recommendedName>
        <fullName evidence="2">Small ribosomal subunit protein uS15c</fullName>
    </recommendedName>
    <alternativeName>
        <fullName>30S ribosomal protein S15, chloroplastic</fullName>
    </alternativeName>
</protein>
<gene>
    <name type="primary">rps15</name>
</gene>
<comment type="subunit">
    <text evidence="1">Part of the 30S ribosomal subunit.</text>
</comment>
<comment type="subcellular location">
    <subcellularLocation>
        <location>Plastid</location>
        <location>Chloroplast</location>
    </subcellularLocation>
</comment>
<comment type="similarity">
    <text evidence="2">Belongs to the universal ribosomal protein uS15 family.</text>
</comment>
<reference key="1">
    <citation type="journal article" date="2000" name="Mol. Gen. Genet.">
        <title>Complete nucleotide sequence of the Oenothera elata plastid chromosome, representing plastome I of the five distinguishable Euoenothera plastomes.</title>
        <authorList>
            <person name="Hupfer H."/>
            <person name="Swiatek M."/>
            <person name="Hornung S."/>
            <person name="Herrmann R.G."/>
            <person name="Maier R.M."/>
            <person name="Chiu W.-L."/>
            <person name="Sears B."/>
        </authorList>
    </citation>
    <scope>NUCLEOTIDE SEQUENCE [LARGE SCALE GENOMIC DNA]</scope>
    <source>
        <strain>cv. Johansen</strain>
    </source>
</reference>
<sequence>MVKKAFISVISQEENRGSVEFQVVSFTNKIRRLTSHLEFHRKDFLSQRGLRKILGKRQRLLSYLSKKDKVRYTELISQLDIRELTTR</sequence>
<name>RR15_OENEH</name>
<evidence type="ECO:0000250" key="1"/>
<evidence type="ECO:0000305" key="2"/>
<geneLocation type="chloroplast"/>
<dbReference type="EMBL" id="AJ271079">
    <property type="protein sequence ID" value="CAC34261.1"/>
    <property type="molecule type" value="Genomic_DNA"/>
</dbReference>
<dbReference type="RefSeq" id="NP_084758.1">
    <property type="nucleotide sequence ID" value="NC_002693.2"/>
</dbReference>
<dbReference type="SMR" id="Q9BA08"/>
<dbReference type="GeneID" id="802807"/>
<dbReference type="GO" id="GO:0009507">
    <property type="term" value="C:chloroplast"/>
    <property type="evidence" value="ECO:0007669"/>
    <property type="project" value="UniProtKB-SubCell"/>
</dbReference>
<dbReference type="GO" id="GO:1990904">
    <property type="term" value="C:ribonucleoprotein complex"/>
    <property type="evidence" value="ECO:0007669"/>
    <property type="project" value="UniProtKB-KW"/>
</dbReference>
<dbReference type="GO" id="GO:0005840">
    <property type="term" value="C:ribosome"/>
    <property type="evidence" value="ECO:0007669"/>
    <property type="project" value="UniProtKB-KW"/>
</dbReference>
<dbReference type="GO" id="GO:0003735">
    <property type="term" value="F:structural constituent of ribosome"/>
    <property type="evidence" value="ECO:0007669"/>
    <property type="project" value="InterPro"/>
</dbReference>
<dbReference type="GO" id="GO:0006412">
    <property type="term" value="P:translation"/>
    <property type="evidence" value="ECO:0007669"/>
    <property type="project" value="UniProtKB-UniRule"/>
</dbReference>
<dbReference type="CDD" id="cd00353">
    <property type="entry name" value="Ribosomal_S15p_S13e"/>
    <property type="match status" value="1"/>
</dbReference>
<dbReference type="Gene3D" id="1.10.287.10">
    <property type="entry name" value="S15/NS1, RNA-binding"/>
    <property type="match status" value="1"/>
</dbReference>
<dbReference type="HAMAP" id="MF_01343_B">
    <property type="entry name" value="Ribosomal_uS15_B"/>
    <property type="match status" value="1"/>
</dbReference>
<dbReference type="InterPro" id="IPR000589">
    <property type="entry name" value="Ribosomal_uS15"/>
</dbReference>
<dbReference type="InterPro" id="IPR005290">
    <property type="entry name" value="Ribosomal_uS15_bac-type"/>
</dbReference>
<dbReference type="InterPro" id="IPR009068">
    <property type="entry name" value="uS15_NS1_RNA-bd_sf"/>
</dbReference>
<dbReference type="NCBIfam" id="TIGR00952">
    <property type="entry name" value="S15_bact"/>
    <property type="match status" value="1"/>
</dbReference>
<dbReference type="PANTHER" id="PTHR23321">
    <property type="entry name" value="RIBOSOMAL PROTEIN S15, BACTERIAL AND ORGANELLAR"/>
    <property type="match status" value="1"/>
</dbReference>
<dbReference type="PANTHER" id="PTHR23321:SF26">
    <property type="entry name" value="SMALL RIBOSOMAL SUBUNIT PROTEIN US15M"/>
    <property type="match status" value="1"/>
</dbReference>
<dbReference type="Pfam" id="PF00312">
    <property type="entry name" value="Ribosomal_S15"/>
    <property type="match status" value="1"/>
</dbReference>
<dbReference type="SMART" id="SM01387">
    <property type="entry name" value="Ribosomal_S15"/>
    <property type="match status" value="1"/>
</dbReference>
<dbReference type="SUPFAM" id="SSF47060">
    <property type="entry name" value="S15/NS1 RNA-binding domain"/>
    <property type="match status" value="1"/>
</dbReference>
<dbReference type="PROSITE" id="PS00362">
    <property type="entry name" value="RIBOSOMAL_S15"/>
    <property type="match status" value="1"/>
</dbReference>
<accession>Q9BA08</accession>